<accession>Q89J82</accession>
<reference key="1">
    <citation type="journal article" date="2002" name="DNA Res.">
        <title>Complete genomic sequence of nitrogen-fixing symbiotic bacterium Bradyrhizobium japonicum USDA110.</title>
        <authorList>
            <person name="Kaneko T."/>
            <person name="Nakamura Y."/>
            <person name="Sato S."/>
            <person name="Minamisawa K."/>
            <person name="Uchiumi T."/>
            <person name="Sasamoto S."/>
            <person name="Watanabe A."/>
            <person name="Idesawa K."/>
            <person name="Iriguchi M."/>
            <person name="Kawashima K."/>
            <person name="Kohara M."/>
            <person name="Matsumoto M."/>
            <person name="Shimpo S."/>
            <person name="Tsuruoka H."/>
            <person name="Wada T."/>
            <person name="Yamada M."/>
            <person name="Tabata S."/>
        </authorList>
    </citation>
    <scope>NUCLEOTIDE SEQUENCE [LARGE SCALE GENOMIC DNA]</scope>
    <source>
        <strain>JCM 10833 / BCRC 13528 / IAM 13628 / NBRC 14792 / USDA 110</strain>
    </source>
</reference>
<evidence type="ECO:0000250" key="1"/>
<evidence type="ECO:0000255" key="2">
    <source>
        <dbReference type="HAMAP-Rule" id="MF_00118"/>
    </source>
</evidence>
<name>EFTU_BRADU</name>
<sequence length="396" mass="43425">MAKAKFERNKPHCNIGTIGHVDHGKTSLTAAITKILAETGGATFTAYDQIDKAPEEKARGITISTAHVEYETKNRHYAHVDCPGHADYVKNMITGAAQMDGAILVVSAADGPMPQTREHILLARQVGVPALVVFLNKCDMVDDPELLELVELEVRELLSKYEFPGDKIPIIKGSALAALEDSDKKLGHDAILELMRNVDEYIPQPERPIDQPFLMPVEDVFSISGRGTVVTGRVERGIVKVGEEIEIVGLRATQKTTVTGVEMFRKLLDQGQAGDNIGALLRGTKREDVERGQVLAKPGSVKPHTKFKAEAYILTKEEGGRHTPFFTNYRPQFYFRTTDVTGVVHLPEGTEMVMPGDNIAMEVHLIVPIAMEEKLRFAIREGGRTVGAGVVASIIE</sequence>
<keyword id="KW-0963">Cytoplasm</keyword>
<keyword id="KW-0251">Elongation factor</keyword>
<keyword id="KW-0342">GTP-binding</keyword>
<keyword id="KW-0378">Hydrolase</keyword>
<keyword id="KW-0460">Magnesium</keyword>
<keyword id="KW-0479">Metal-binding</keyword>
<keyword id="KW-0547">Nucleotide-binding</keyword>
<keyword id="KW-0648">Protein biosynthesis</keyword>
<keyword id="KW-1185">Reference proteome</keyword>
<gene>
    <name evidence="2" type="primary">tuf</name>
    <name type="ordered locus">bll5402</name>
</gene>
<protein>
    <recommendedName>
        <fullName evidence="2">Elongation factor Tu</fullName>
        <shortName evidence="2">EF-Tu</shortName>
        <ecNumber evidence="2">3.6.5.3</ecNumber>
    </recommendedName>
</protein>
<feature type="chain" id="PRO_1000015621" description="Elongation factor Tu">
    <location>
        <begin position="1"/>
        <end position="396"/>
    </location>
</feature>
<feature type="domain" description="tr-type G">
    <location>
        <begin position="10"/>
        <end position="206"/>
    </location>
</feature>
<feature type="region of interest" description="G1" evidence="1">
    <location>
        <begin position="19"/>
        <end position="26"/>
    </location>
</feature>
<feature type="region of interest" description="G2" evidence="1">
    <location>
        <begin position="60"/>
        <end position="64"/>
    </location>
</feature>
<feature type="region of interest" description="G3" evidence="1">
    <location>
        <begin position="81"/>
        <end position="84"/>
    </location>
</feature>
<feature type="region of interest" description="G4" evidence="1">
    <location>
        <begin position="136"/>
        <end position="139"/>
    </location>
</feature>
<feature type="region of interest" description="G5" evidence="1">
    <location>
        <begin position="174"/>
        <end position="176"/>
    </location>
</feature>
<feature type="binding site" evidence="2">
    <location>
        <begin position="19"/>
        <end position="26"/>
    </location>
    <ligand>
        <name>GTP</name>
        <dbReference type="ChEBI" id="CHEBI:37565"/>
    </ligand>
</feature>
<feature type="binding site" evidence="2">
    <location>
        <position position="26"/>
    </location>
    <ligand>
        <name>Mg(2+)</name>
        <dbReference type="ChEBI" id="CHEBI:18420"/>
    </ligand>
</feature>
<feature type="binding site" evidence="2">
    <location>
        <begin position="81"/>
        <end position="85"/>
    </location>
    <ligand>
        <name>GTP</name>
        <dbReference type="ChEBI" id="CHEBI:37565"/>
    </ligand>
</feature>
<feature type="binding site" evidence="2">
    <location>
        <begin position="136"/>
        <end position="139"/>
    </location>
    <ligand>
        <name>GTP</name>
        <dbReference type="ChEBI" id="CHEBI:37565"/>
    </ligand>
</feature>
<comment type="function">
    <text evidence="2">GTP hydrolase that promotes the GTP-dependent binding of aminoacyl-tRNA to the A-site of ribosomes during protein biosynthesis.</text>
</comment>
<comment type="catalytic activity">
    <reaction evidence="2">
        <text>GTP + H2O = GDP + phosphate + H(+)</text>
        <dbReference type="Rhea" id="RHEA:19669"/>
        <dbReference type="ChEBI" id="CHEBI:15377"/>
        <dbReference type="ChEBI" id="CHEBI:15378"/>
        <dbReference type="ChEBI" id="CHEBI:37565"/>
        <dbReference type="ChEBI" id="CHEBI:43474"/>
        <dbReference type="ChEBI" id="CHEBI:58189"/>
        <dbReference type="EC" id="3.6.5.3"/>
    </reaction>
    <physiologicalReaction direction="left-to-right" evidence="2">
        <dbReference type="Rhea" id="RHEA:19670"/>
    </physiologicalReaction>
</comment>
<comment type="subunit">
    <text evidence="2">Monomer.</text>
</comment>
<comment type="subcellular location">
    <subcellularLocation>
        <location evidence="2">Cytoplasm</location>
    </subcellularLocation>
</comment>
<comment type="similarity">
    <text evidence="2">Belongs to the TRAFAC class translation factor GTPase superfamily. Classic translation factor GTPase family. EF-Tu/EF-1A subfamily.</text>
</comment>
<dbReference type="EC" id="3.6.5.3" evidence="2"/>
<dbReference type="EMBL" id="BA000040">
    <property type="protein sequence ID" value="BAC50667.1"/>
    <property type="molecule type" value="Genomic_DNA"/>
</dbReference>
<dbReference type="RefSeq" id="NP_772042.1">
    <property type="nucleotide sequence ID" value="NC_004463.1"/>
</dbReference>
<dbReference type="RefSeq" id="WP_011088152.1">
    <property type="nucleotide sequence ID" value="NZ_CP011360.1"/>
</dbReference>
<dbReference type="SMR" id="Q89J82"/>
<dbReference type="FunCoup" id="Q89J82">
    <property type="interactions" value="831"/>
</dbReference>
<dbReference type="STRING" id="224911.AAV28_24420"/>
<dbReference type="EnsemblBacteria" id="BAC50667">
    <property type="protein sequence ID" value="BAC50667"/>
    <property type="gene ID" value="BAC50667"/>
</dbReference>
<dbReference type="GeneID" id="46492400"/>
<dbReference type="KEGG" id="bja:bll5402"/>
<dbReference type="PATRIC" id="fig|224911.44.peg.5301"/>
<dbReference type="eggNOG" id="COG0050">
    <property type="taxonomic scope" value="Bacteria"/>
</dbReference>
<dbReference type="HOGENOM" id="CLU_007265_0_0_5"/>
<dbReference type="InParanoid" id="Q89J82"/>
<dbReference type="OrthoDB" id="9803139at2"/>
<dbReference type="PhylomeDB" id="Q89J82"/>
<dbReference type="Proteomes" id="UP000002526">
    <property type="component" value="Chromosome"/>
</dbReference>
<dbReference type="GO" id="GO:0005737">
    <property type="term" value="C:cytoplasm"/>
    <property type="evidence" value="ECO:0007669"/>
    <property type="project" value="UniProtKB-SubCell"/>
</dbReference>
<dbReference type="GO" id="GO:0005525">
    <property type="term" value="F:GTP binding"/>
    <property type="evidence" value="ECO:0007669"/>
    <property type="project" value="UniProtKB-UniRule"/>
</dbReference>
<dbReference type="GO" id="GO:0003924">
    <property type="term" value="F:GTPase activity"/>
    <property type="evidence" value="ECO:0007669"/>
    <property type="project" value="InterPro"/>
</dbReference>
<dbReference type="GO" id="GO:0097216">
    <property type="term" value="F:guanosine tetraphosphate binding"/>
    <property type="evidence" value="ECO:0007669"/>
    <property type="project" value="UniProtKB-ARBA"/>
</dbReference>
<dbReference type="GO" id="GO:0003746">
    <property type="term" value="F:translation elongation factor activity"/>
    <property type="evidence" value="ECO:0000318"/>
    <property type="project" value="GO_Central"/>
</dbReference>
<dbReference type="GO" id="GO:0006414">
    <property type="term" value="P:translational elongation"/>
    <property type="evidence" value="ECO:0000318"/>
    <property type="project" value="GO_Central"/>
</dbReference>
<dbReference type="CDD" id="cd01884">
    <property type="entry name" value="EF_Tu"/>
    <property type="match status" value="1"/>
</dbReference>
<dbReference type="CDD" id="cd03697">
    <property type="entry name" value="EFTU_II"/>
    <property type="match status" value="1"/>
</dbReference>
<dbReference type="CDD" id="cd03707">
    <property type="entry name" value="EFTU_III"/>
    <property type="match status" value="1"/>
</dbReference>
<dbReference type="FunFam" id="2.40.30.10:FF:000001">
    <property type="entry name" value="Elongation factor Tu"/>
    <property type="match status" value="1"/>
</dbReference>
<dbReference type="FunFam" id="3.40.50.300:FF:000003">
    <property type="entry name" value="Elongation factor Tu"/>
    <property type="match status" value="1"/>
</dbReference>
<dbReference type="Gene3D" id="3.40.50.300">
    <property type="entry name" value="P-loop containing nucleotide triphosphate hydrolases"/>
    <property type="match status" value="1"/>
</dbReference>
<dbReference type="Gene3D" id="2.40.30.10">
    <property type="entry name" value="Translation factors"/>
    <property type="match status" value="2"/>
</dbReference>
<dbReference type="HAMAP" id="MF_00118_B">
    <property type="entry name" value="EF_Tu_B"/>
    <property type="match status" value="1"/>
</dbReference>
<dbReference type="InterPro" id="IPR041709">
    <property type="entry name" value="EF-Tu_GTP-bd"/>
</dbReference>
<dbReference type="InterPro" id="IPR050055">
    <property type="entry name" value="EF-Tu_GTPase"/>
</dbReference>
<dbReference type="InterPro" id="IPR004161">
    <property type="entry name" value="EFTu-like_2"/>
</dbReference>
<dbReference type="InterPro" id="IPR033720">
    <property type="entry name" value="EFTU_2"/>
</dbReference>
<dbReference type="InterPro" id="IPR031157">
    <property type="entry name" value="G_TR_CS"/>
</dbReference>
<dbReference type="InterPro" id="IPR027417">
    <property type="entry name" value="P-loop_NTPase"/>
</dbReference>
<dbReference type="InterPro" id="IPR005225">
    <property type="entry name" value="Small_GTP-bd"/>
</dbReference>
<dbReference type="InterPro" id="IPR000795">
    <property type="entry name" value="T_Tr_GTP-bd_dom"/>
</dbReference>
<dbReference type="InterPro" id="IPR009000">
    <property type="entry name" value="Transl_B-barrel_sf"/>
</dbReference>
<dbReference type="InterPro" id="IPR009001">
    <property type="entry name" value="Transl_elong_EF1A/Init_IF2_C"/>
</dbReference>
<dbReference type="InterPro" id="IPR004541">
    <property type="entry name" value="Transl_elong_EFTu/EF1A_bac/org"/>
</dbReference>
<dbReference type="InterPro" id="IPR004160">
    <property type="entry name" value="Transl_elong_EFTu/EF1A_C"/>
</dbReference>
<dbReference type="NCBIfam" id="TIGR00485">
    <property type="entry name" value="EF-Tu"/>
    <property type="match status" value="1"/>
</dbReference>
<dbReference type="NCBIfam" id="NF000766">
    <property type="entry name" value="PRK00049.1"/>
    <property type="match status" value="1"/>
</dbReference>
<dbReference type="NCBIfam" id="NF009372">
    <property type="entry name" value="PRK12735.1"/>
    <property type="match status" value="1"/>
</dbReference>
<dbReference type="NCBIfam" id="NF009373">
    <property type="entry name" value="PRK12736.1"/>
    <property type="match status" value="1"/>
</dbReference>
<dbReference type="NCBIfam" id="TIGR00231">
    <property type="entry name" value="small_GTP"/>
    <property type="match status" value="1"/>
</dbReference>
<dbReference type="PANTHER" id="PTHR43721:SF22">
    <property type="entry name" value="ELONGATION FACTOR TU, MITOCHONDRIAL"/>
    <property type="match status" value="1"/>
</dbReference>
<dbReference type="PANTHER" id="PTHR43721">
    <property type="entry name" value="ELONGATION FACTOR TU-RELATED"/>
    <property type="match status" value="1"/>
</dbReference>
<dbReference type="Pfam" id="PF00009">
    <property type="entry name" value="GTP_EFTU"/>
    <property type="match status" value="1"/>
</dbReference>
<dbReference type="Pfam" id="PF03144">
    <property type="entry name" value="GTP_EFTU_D2"/>
    <property type="match status" value="1"/>
</dbReference>
<dbReference type="Pfam" id="PF03143">
    <property type="entry name" value="GTP_EFTU_D3"/>
    <property type="match status" value="1"/>
</dbReference>
<dbReference type="PRINTS" id="PR00315">
    <property type="entry name" value="ELONGATNFCT"/>
</dbReference>
<dbReference type="SUPFAM" id="SSF50465">
    <property type="entry name" value="EF-Tu/eEF-1alpha/eIF2-gamma C-terminal domain"/>
    <property type="match status" value="1"/>
</dbReference>
<dbReference type="SUPFAM" id="SSF52540">
    <property type="entry name" value="P-loop containing nucleoside triphosphate hydrolases"/>
    <property type="match status" value="1"/>
</dbReference>
<dbReference type="SUPFAM" id="SSF50447">
    <property type="entry name" value="Translation proteins"/>
    <property type="match status" value="1"/>
</dbReference>
<dbReference type="PROSITE" id="PS00301">
    <property type="entry name" value="G_TR_1"/>
    <property type="match status" value="1"/>
</dbReference>
<dbReference type="PROSITE" id="PS51722">
    <property type="entry name" value="G_TR_2"/>
    <property type="match status" value="1"/>
</dbReference>
<proteinExistence type="inferred from homology"/>
<organism>
    <name type="scientific">Bradyrhizobium diazoefficiens (strain JCM 10833 / BCRC 13528 / IAM 13628 / NBRC 14792 / USDA 110)</name>
    <dbReference type="NCBI Taxonomy" id="224911"/>
    <lineage>
        <taxon>Bacteria</taxon>
        <taxon>Pseudomonadati</taxon>
        <taxon>Pseudomonadota</taxon>
        <taxon>Alphaproteobacteria</taxon>
        <taxon>Hyphomicrobiales</taxon>
        <taxon>Nitrobacteraceae</taxon>
        <taxon>Bradyrhizobium</taxon>
    </lineage>
</organism>